<proteinExistence type="inferred from homology"/>
<comment type="function">
    <text evidence="1">Catalyzes the last two sequential reactions in the de novo biosynthetic pathway for UDP-N-acetylglucosamine (UDP-GlcNAc). The C-terminal domain catalyzes the transfer of acetyl group from acetyl coenzyme A to glucosamine-1-phosphate (GlcN-1-P) to produce N-acetylglucosamine-1-phosphate (GlcNAc-1-P), which is converted into UDP-GlcNAc by the transfer of uridine 5-monophosphate (from uridine 5-triphosphate), a reaction catalyzed by the N-terminal domain.</text>
</comment>
<comment type="catalytic activity">
    <reaction evidence="1">
        <text>alpha-D-glucosamine 1-phosphate + acetyl-CoA = N-acetyl-alpha-D-glucosamine 1-phosphate + CoA + H(+)</text>
        <dbReference type="Rhea" id="RHEA:13725"/>
        <dbReference type="ChEBI" id="CHEBI:15378"/>
        <dbReference type="ChEBI" id="CHEBI:57287"/>
        <dbReference type="ChEBI" id="CHEBI:57288"/>
        <dbReference type="ChEBI" id="CHEBI:57776"/>
        <dbReference type="ChEBI" id="CHEBI:58516"/>
        <dbReference type="EC" id="2.3.1.157"/>
    </reaction>
</comment>
<comment type="catalytic activity">
    <reaction evidence="1">
        <text>N-acetyl-alpha-D-glucosamine 1-phosphate + UTP + H(+) = UDP-N-acetyl-alpha-D-glucosamine + diphosphate</text>
        <dbReference type="Rhea" id="RHEA:13509"/>
        <dbReference type="ChEBI" id="CHEBI:15378"/>
        <dbReference type="ChEBI" id="CHEBI:33019"/>
        <dbReference type="ChEBI" id="CHEBI:46398"/>
        <dbReference type="ChEBI" id="CHEBI:57705"/>
        <dbReference type="ChEBI" id="CHEBI:57776"/>
        <dbReference type="EC" id="2.7.7.23"/>
    </reaction>
</comment>
<comment type="cofactor">
    <cofactor evidence="1">
        <name>Mg(2+)</name>
        <dbReference type="ChEBI" id="CHEBI:18420"/>
    </cofactor>
    <text evidence="1">Binds 1 Mg(2+) ion per subunit.</text>
</comment>
<comment type="pathway">
    <text evidence="1">Nucleotide-sugar biosynthesis; UDP-N-acetyl-alpha-D-glucosamine biosynthesis; N-acetyl-alpha-D-glucosamine 1-phosphate from alpha-D-glucosamine 6-phosphate (route II): step 2/2.</text>
</comment>
<comment type="pathway">
    <text evidence="1">Nucleotide-sugar biosynthesis; UDP-N-acetyl-alpha-D-glucosamine biosynthesis; UDP-N-acetyl-alpha-D-glucosamine from N-acetyl-alpha-D-glucosamine 1-phosphate: step 1/1.</text>
</comment>
<comment type="pathway">
    <text evidence="1">Bacterial outer membrane biogenesis; LPS lipid A biosynthesis.</text>
</comment>
<comment type="subunit">
    <text evidence="1">Homotrimer.</text>
</comment>
<comment type="subcellular location">
    <subcellularLocation>
        <location evidence="1">Cytoplasm</location>
    </subcellularLocation>
</comment>
<comment type="similarity">
    <text evidence="1">In the N-terminal section; belongs to the N-acetylglucosamine-1-phosphate uridyltransferase family.</text>
</comment>
<comment type="similarity">
    <text evidence="1">In the C-terminal section; belongs to the transferase hexapeptide repeat family.</text>
</comment>
<keyword id="KW-0012">Acyltransferase</keyword>
<keyword id="KW-0133">Cell shape</keyword>
<keyword id="KW-0961">Cell wall biogenesis/degradation</keyword>
<keyword id="KW-0963">Cytoplasm</keyword>
<keyword id="KW-0460">Magnesium</keyword>
<keyword id="KW-0479">Metal-binding</keyword>
<keyword id="KW-0511">Multifunctional enzyme</keyword>
<keyword id="KW-0548">Nucleotidyltransferase</keyword>
<keyword id="KW-0573">Peptidoglycan synthesis</keyword>
<keyword id="KW-1185">Reference proteome</keyword>
<keyword id="KW-0677">Repeat</keyword>
<keyword id="KW-0808">Transferase</keyword>
<feature type="chain" id="PRO_1000186442" description="Bifunctional protein GlmU">
    <location>
        <begin position="1"/>
        <end position="456"/>
    </location>
</feature>
<feature type="region of interest" description="Pyrophosphorylase" evidence="1">
    <location>
        <begin position="1"/>
        <end position="229"/>
    </location>
</feature>
<feature type="region of interest" description="Linker" evidence="1">
    <location>
        <begin position="230"/>
        <end position="250"/>
    </location>
</feature>
<feature type="region of interest" description="N-acetyltransferase" evidence="1">
    <location>
        <begin position="251"/>
        <end position="456"/>
    </location>
</feature>
<feature type="active site" description="Proton acceptor" evidence="1">
    <location>
        <position position="363"/>
    </location>
</feature>
<feature type="binding site" evidence="1">
    <location>
        <begin position="11"/>
        <end position="14"/>
    </location>
    <ligand>
        <name>UDP-N-acetyl-alpha-D-glucosamine</name>
        <dbReference type="ChEBI" id="CHEBI:57705"/>
    </ligand>
</feature>
<feature type="binding site" evidence="1">
    <location>
        <position position="25"/>
    </location>
    <ligand>
        <name>UDP-N-acetyl-alpha-D-glucosamine</name>
        <dbReference type="ChEBI" id="CHEBI:57705"/>
    </ligand>
</feature>
<feature type="binding site" evidence="1">
    <location>
        <position position="76"/>
    </location>
    <ligand>
        <name>UDP-N-acetyl-alpha-D-glucosamine</name>
        <dbReference type="ChEBI" id="CHEBI:57705"/>
    </ligand>
</feature>
<feature type="binding site" evidence="1">
    <location>
        <begin position="81"/>
        <end position="82"/>
    </location>
    <ligand>
        <name>UDP-N-acetyl-alpha-D-glucosamine</name>
        <dbReference type="ChEBI" id="CHEBI:57705"/>
    </ligand>
</feature>
<feature type="binding site" evidence="1">
    <location>
        <begin position="103"/>
        <end position="105"/>
    </location>
    <ligand>
        <name>UDP-N-acetyl-alpha-D-glucosamine</name>
        <dbReference type="ChEBI" id="CHEBI:57705"/>
    </ligand>
</feature>
<feature type="binding site" evidence="1">
    <location>
        <position position="105"/>
    </location>
    <ligand>
        <name>Mg(2+)</name>
        <dbReference type="ChEBI" id="CHEBI:18420"/>
    </ligand>
</feature>
<feature type="binding site" evidence="1">
    <location>
        <position position="140"/>
    </location>
    <ligand>
        <name>UDP-N-acetyl-alpha-D-glucosamine</name>
        <dbReference type="ChEBI" id="CHEBI:57705"/>
    </ligand>
</feature>
<feature type="binding site" evidence="1">
    <location>
        <position position="154"/>
    </location>
    <ligand>
        <name>UDP-N-acetyl-alpha-D-glucosamine</name>
        <dbReference type="ChEBI" id="CHEBI:57705"/>
    </ligand>
</feature>
<feature type="binding site" evidence="1">
    <location>
        <position position="169"/>
    </location>
    <ligand>
        <name>UDP-N-acetyl-alpha-D-glucosamine</name>
        <dbReference type="ChEBI" id="CHEBI:57705"/>
    </ligand>
</feature>
<feature type="binding site" evidence="1">
    <location>
        <position position="227"/>
    </location>
    <ligand>
        <name>Mg(2+)</name>
        <dbReference type="ChEBI" id="CHEBI:18420"/>
    </ligand>
</feature>
<feature type="binding site" evidence="1">
    <location>
        <position position="227"/>
    </location>
    <ligand>
        <name>UDP-N-acetyl-alpha-D-glucosamine</name>
        <dbReference type="ChEBI" id="CHEBI:57705"/>
    </ligand>
</feature>
<feature type="binding site" evidence="1">
    <location>
        <position position="333"/>
    </location>
    <ligand>
        <name>UDP-N-acetyl-alpha-D-glucosamine</name>
        <dbReference type="ChEBI" id="CHEBI:57705"/>
    </ligand>
</feature>
<feature type="binding site" evidence="1">
    <location>
        <position position="351"/>
    </location>
    <ligand>
        <name>UDP-N-acetyl-alpha-D-glucosamine</name>
        <dbReference type="ChEBI" id="CHEBI:57705"/>
    </ligand>
</feature>
<feature type="binding site" evidence="1">
    <location>
        <position position="366"/>
    </location>
    <ligand>
        <name>UDP-N-acetyl-alpha-D-glucosamine</name>
        <dbReference type="ChEBI" id="CHEBI:57705"/>
    </ligand>
</feature>
<feature type="binding site" evidence="1">
    <location>
        <position position="377"/>
    </location>
    <ligand>
        <name>UDP-N-acetyl-alpha-D-glucosamine</name>
        <dbReference type="ChEBI" id="CHEBI:57705"/>
    </ligand>
</feature>
<feature type="binding site" evidence="1">
    <location>
        <position position="380"/>
    </location>
    <ligand>
        <name>acetyl-CoA</name>
        <dbReference type="ChEBI" id="CHEBI:57288"/>
    </ligand>
</feature>
<feature type="binding site" evidence="1">
    <location>
        <begin position="386"/>
        <end position="387"/>
    </location>
    <ligand>
        <name>acetyl-CoA</name>
        <dbReference type="ChEBI" id="CHEBI:57288"/>
    </ligand>
</feature>
<feature type="binding site" evidence="1">
    <location>
        <position position="405"/>
    </location>
    <ligand>
        <name>acetyl-CoA</name>
        <dbReference type="ChEBI" id="CHEBI:57288"/>
    </ligand>
</feature>
<feature type="binding site" evidence="1">
    <location>
        <position position="423"/>
    </location>
    <ligand>
        <name>acetyl-CoA</name>
        <dbReference type="ChEBI" id="CHEBI:57288"/>
    </ligand>
</feature>
<feature type="binding site" evidence="1">
    <location>
        <position position="440"/>
    </location>
    <ligand>
        <name>acetyl-CoA</name>
        <dbReference type="ChEBI" id="CHEBI:57288"/>
    </ligand>
</feature>
<protein>
    <recommendedName>
        <fullName evidence="1">Bifunctional protein GlmU</fullName>
    </recommendedName>
    <domain>
        <recommendedName>
            <fullName evidence="1">UDP-N-acetylglucosamine pyrophosphorylase</fullName>
            <ecNumber evidence="1">2.7.7.23</ecNumber>
        </recommendedName>
        <alternativeName>
            <fullName evidence="1">N-acetylglucosamine-1-phosphate uridyltransferase</fullName>
        </alternativeName>
    </domain>
    <domain>
        <recommendedName>
            <fullName evidence="1">Glucosamine-1-phosphate N-acetyltransferase</fullName>
            <ecNumber evidence="1">2.3.1.157</ecNumber>
        </recommendedName>
    </domain>
</protein>
<reference key="1">
    <citation type="journal article" date="2009" name="PLoS Genet.">
        <title>Organised genome dynamics in the Escherichia coli species results in highly diverse adaptive paths.</title>
        <authorList>
            <person name="Touchon M."/>
            <person name="Hoede C."/>
            <person name="Tenaillon O."/>
            <person name="Barbe V."/>
            <person name="Baeriswyl S."/>
            <person name="Bidet P."/>
            <person name="Bingen E."/>
            <person name="Bonacorsi S."/>
            <person name="Bouchier C."/>
            <person name="Bouvet O."/>
            <person name="Calteau A."/>
            <person name="Chiapello H."/>
            <person name="Clermont O."/>
            <person name="Cruveiller S."/>
            <person name="Danchin A."/>
            <person name="Diard M."/>
            <person name="Dossat C."/>
            <person name="Karoui M.E."/>
            <person name="Frapy E."/>
            <person name="Garry L."/>
            <person name="Ghigo J.M."/>
            <person name="Gilles A.M."/>
            <person name="Johnson J."/>
            <person name="Le Bouguenec C."/>
            <person name="Lescat M."/>
            <person name="Mangenot S."/>
            <person name="Martinez-Jehanne V."/>
            <person name="Matic I."/>
            <person name="Nassif X."/>
            <person name="Oztas S."/>
            <person name="Petit M.A."/>
            <person name="Pichon C."/>
            <person name="Rouy Z."/>
            <person name="Ruf C.S."/>
            <person name="Schneider D."/>
            <person name="Tourret J."/>
            <person name="Vacherie B."/>
            <person name="Vallenet D."/>
            <person name="Medigue C."/>
            <person name="Rocha E.P.C."/>
            <person name="Denamur E."/>
        </authorList>
    </citation>
    <scope>NUCLEOTIDE SEQUENCE [LARGE SCALE GENOMIC DNA]</scope>
    <source>
        <strain>S88 / ExPEC</strain>
    </source>
</reference>
<name>GLMU_ECO45</name>
<dbReference type="EC" id="2.7.7.23" evidence="1"/>
<dbReference type="EC" id="2.3.1.157" evidence="1"/>
<dbReference type="EMBL" id="CU928161">
    <property type="protein sequence ID" value="CAR05358.1"/>
    <property type="molecule type" value="Genomic_DNA"/>
</dbReference>
<dbReference type="RefSeq" id="WP_000933754.1">
    <property type="nucleotide sequence ID" value="NC_011742.1"/>
</dbReference>
<dbReference type="SMR" id="B7MGF0"/>
<dbReference type="KEGG" id="ecz:ECS88_4152"/>
<dbReference type="HOGENOM" id="CLU_029499_15_2_6"/>
<dbReference type="UniPathway" id="UPA00113">
    <property type="reaction ID" value="UER00532"/>
</dbReference>
<dbReference type="UniPathway" id="UPA00113">
    <property type="reaction ID" value="UER00533"/>
</dbReference>
<dbReference type="UniPathway" id="UPA00973"/>
<dbReference type="Proteomes" id="UP000000747">
    <property type="component" value="Chromosome"/>
</dbReference>
<dbReference type="GO" id="GO:0005737">
    <property type="term" value="C:cytoplasm"/>
    <property type="evidence" value="ECO:0007669"/>
    <property type="project" value="UniProtKB-SubCell"/>
</dbReference>
<dbReference type="GO" id="GO:0016020">
    <property type="term" value="C:membrane"/>
    <property type="evidence" value="ECO:0007669"/>
    <property type="project" value="GOC"/>
</dbReference>
<dbReference type="GO" id="GO:0019134">
    <property type="term" value="F:glucosamine-1-phosphate N-acetyltransferase activity"/>
    <property type="evidence" value="ECO:0007669"/>
    <property type="project" value="UniProtKB-UniRule"/>
</dbReference>
<dbReference type="GO" id="GO:0000287">
    <property type="term" value="F:magnesium ion binding"/>
    <property type="evidence" value="ECO:0007669"/>
    <property type="project" value="UniProtKB-UniRule"/>
</dbReference>
<dbReference type="GO" id="GO:0003977">
    <property type="term" value="F:UDP-N-acetylglucosamine diphosphorylase activity"/>
    <property type="evidence" value="ECO:0007669"/>
    <property type="project" value="UniProtKB-UniRule"/>
</dbReference>
<dbReference type="GO" id="GO:0000902">
    <property type="term" value="P:cell morphogenesis"/>
    <property type="evidence" value="ECO:0007669"/>
    <property type="project" value="UniProtKB-UniRule"/>
</dbReference>
<dbReference type="GO" id="GO:0071555">
    <property type="term" value="P:cell wall organization"/>
    <property type="evidence" value="ECO:0007669"/>
    <property type="project" value="UniProtKB-KW"/>
</dbReference>
<dbReference type="GO" id="GO:0009245">
    <property type="term" value="P:lipid A biosynthetic process"/>
    <property type="evidence" value="ECO:0007669"/>
    <property type="project" value="UniProtKB-UniRule"/>
</dbReference>
<dbReference type="GO" id="GO:0009252">
    <property type="term" value="P:peptidoglycan biosynthetic process"/>
    <property type="evidence" value="ECO:0007669"/>
    <property type="project" value="UniProtKB-UniRule"/>
</dbReference>
<dbReference type="GO" id="GO:0008360">
    <property type="term" value="P:regulation of cell shape"/>
    <property type="evidence" value="ECO:0007669"/>
    <property type="project" value="UniProtKB-KW"/>
</dbReference>
<dbReference type="GO" id="GO:0006048">
    <property type="term" value="P:UDP-N-acetylglucosamine biosynthetic process"/>
    <property type="evidence" value="ECO:0007669"/>
    <property type="project" value="UniProtKB-UniPathway"/>
</dbReference>
<dbReference type="CDD" id="cd02540">
    <property type="entry name" value="GT2_GlmU_N_bac"/>
    <property type="match status" value="1"/>
</dbReference>
<dbReference type="CDD" id="cd03353">
    <property type="entry name" value="LbH_GlmU_C"/>
    <property type="match status" value="1"/>
</dbReference>
<dbReference type="FunFam" id="2.160.10.10:FF:000011">
    <property type="entry name" value="Bifunctional protein GlmU"/>
    <property type="match status" value="1"/>
</dbReference>
<dbReference type="FunFam" id="3.90.550.10:FF:000006">
    <property type="entry name" value="Bifunctional protein GlmU"/>
    <property type="match status" value="1"/>
</dbReference>
<dbReference type="Gene3D" id="2.160.10.10">
    <property type="entry name" value="Hexapeptide repeat proteins"/>
    <property type="match status" value="1"/>
</dbReference>
<dbReference type="Gene3D" id="3.90.550.10">
    <property type="entry name" value="Spore Coat Polysaccharide Biosynthesis Protein SpsA, Chain A"/>
    <property type="match status" value="1"/>
</dbReference>
<dbReference type="HAMAP" id="MF_01631">
    <property type="entry name" value="GlmU"/>
    <property type="match status" value="1"/>
</dbReference>
<dbReference type="InterPro" id="IPR005882">
    <property type="entry name" value="Bifunctional_GlmU"/>
</dbReference>
<dbReference type="InterPro" id="IPR050065">
    <property type="entry name" value="GlmU-like"/>
</dbReference>
<dbReference type="InterPro" id="IPR038009">
    <property type="entry name" value="GlmU_C_LbH"/>
</dbReference>
<dbReference type="InterPro" id="IPR001451">
    <property type="entry name" value="Hexapep"/>
</dbReference>
<dbReference type="InterPro" id="IPR018357">
    <property type="entry name" value="Hexapep_transf_CS"/>
</dbReference>
<dbReference type="InterPro" id="IPR025877">
    <property type="entry name" value="MobA-like_NTP_Trfase"/>
</dbReference>
<dbReference type="InterPro" id="IPR029044">
    <property type="entry name" value="Nucleotide-diphossugar_trans"/>
</dbReference>
<dbReference type="InterPro" id="IPR011004">
    <property type="entry name" value="Trimer_LpxA-like_sf"/>
</dbReference>
<dbReference type="NCBIfam" id="TIGR01173">
    <property type="entry name" value="glmU"/>
    <property type="match status" value="1"/>
</dbReference>
<dbReference type="NCBIfam" id="NF006986">
    <property type="entry name" value="PRK09451.1"/>
    <property type="match status" value="1"/>
</dbReference>
<dbReference type="PANTHER" id="PTHR43584:SF3">
    <property type="entry name" value="BIFUNCTIONAL PROTEIN GLMU"/>
    <property type="match status" value="1"/>
</dbReference>
<dbReference type="PANTHER" id="PTHR43584">
    <property type="entry name" value="NUCLEOTIDYL TRANSFERASE"/>
    <property type="match status" value="1"/>
</dbReference>
<dbReference type="Pfam" id="PF00132">
    <property type="entry name" value="Hexapep"/>
    <property type="match status" value="1"/>
</dbReference>
<dbReference type="Pfam" id="PF12804">
    <property type="entry name" value="NTP_transf_3"/>
    <property type="match status" value="1"/>
</dbReference>
<dbReference type="SUPFAM" id="SSF53448">
    <property type="entry name" value="Nucleotide-diphospho-sugar transferases"/>
    <property type="match status" value="1"/>
</dbReference>
<dbReference type="SUPFAM" id="SSF51161">
    <property type="entry name" value="Trimeric LpxA-like enzymes"/>
    <property type="match status" value="1"/>
</dbReference>
<dbReference type="PROSITE" id="PS00101">
    <property type="entry name" value="HEXAPEP_TRANSFERASES"/>
    <property type="match status" value="1"/>
</dbReference>
<sequence>MLNNAMSVVILAAGKGTRMYSDLPKVLHTLAGKAMVQHVIDAANELGAAHVHLVYGHGGDLLKQALKDDNLNWVLQTEQLGTGHAMQQAAPFFADDEDILMLYGDVPLISVETLQRLRDAKPQGGIGLLTVKLDDPTGYGRITRENGKVTGIVEHKDATDEQRQIQEINTGILIANGADMKRWLAKLTNNNAQGEYYITDIIALAYQEGREIVAVHPQRLSEVEGVNNRLQLSRLERVYQSEQAEKLLLAGVMLRDPARFDLRGTLTHGRDVEIDTNVIIEGNVTLGHRVKIGTGCVIKNSVIGDDCEISPYTVVEDANLAAACTIGPFARLRPGAELLEGAHVGNFVEMKKARLGKGSKAGHLTYLGDAEIGDNVNIGAGTITCNYDGANKFKTIIGDDVFVGSDTQLVAPVTVGKGATIAAGTTVTRNVGENALAISRVPQTQKEGWRRPVKKK</sequence>
<organism>
    <name type="scientific">Escherichia coli O45:K1 (strain S88 / ExPEC)</name>
    <dbReference type="NCBI Taxonomy" id="585035"/>
    <lineage>
        <taxon>Bacteria</taxon>
        <taxon>Pseudomonadati</taxon>
        <taxon>Pseudomonadota</taxon>
        <taxon>Gammaproteobacteria</taxon>
        <taxon>Enterobacterales</taxon>
        <taxon>Enterobacteriaceae</taxon>
        <taxon>Escherichia</taxon>
    </lineage>
</organism>
<gene>
    <name evidence="1" type="primary">glmU</name>
    <name type="ordered locus">ECS88_4152</name>
</gene>
<evidence type="ECO:0000255" key="1">
    <source>
        <dbReference type="HAMAP-Rule" id="MF_01631"/>
    </source>
</evidence>
<accession>B7MGF0</accession>